<name>RUVB_HELPS</name>
<proteinExistence type="inferred from homology"/>
<reference key="1">
    <citation type="submission" date="2008-05" db="EMBL/GenBank/DDBJ databases">
        <title>Genome sequence of Helicobacter pylori from the remote Amazon: traces of Asian ancestry of the first Americans.</title>
        <authorList>
            <person name="Kersulyte D."/>
            <person name="Kalia A."/>
            <person name="Gilman R.H."/>
            <person name="Berg D.E."/>
        </authorList>
    </citation>
    <scope>NUCLEOTIDE SEQUENCE [LARGE SCALE GENOMIC DNA]</scope>
    <source>
        <strain>Shi470</strain>
    </source>
</reference>
<dbReference type="EC" id="3.6.4.-" evidence="1"/>
<dbReference type="EMBL" id="CP001072">
    <property type="protein sequence ID" value="ACD47855.1"/>
    <property type="molecule type" value="Genomic_DNA"/>
</dbReference>
<dbReference type="RefSeq" id="WP_000664454.1">
    <property type="nucleotide sequence ID" value="NC_010698.2"/>
</dbReference>
<dbReference type="SMR" id="B2USM3"/>
<dbReference type="KEGG" id="hps:HPSH_02025"/>
<dbReference type="HOGENOM" id="CLU_055599_1_0_7"/>
<dbReference type="GO" id="GO:0005737">
    <property type="term" value="C:cytoplasm"/>
    <property type="evidence" value="ECO:0007669"/>
    <property type="project" value="UniProtKB-SubCell"/>
</dbReference>
<dbReference type="GO" id="GO:0048476">
    <property type="term" value="C:Holliday junction resolvase complex"/>
    <property type="evidence" value="ECO:0007669"/>
    <property type="project" value="UniProtKB-UniRule"/>
</dbReference>
<dbReference type="GO" id="GO:0005524">
    <property type="term" value="F:ATP binding"/>
    <property type="evidence" value="ECO:0007669"/>
    <property type="project" value="UniProtKB-UniRule"/>
</dbReference>
<dbReference type="GO" id="GO:0016887">
    <property type="term" value="F:ATP hydrolysis activity"/>
    <property type="evidence" value="ECO:0007669"/>
    <property type="project" value="InterPro"/>
</dbReference>
<dbReference type="GO" id="GO:0000400">
    <property type="term" value="F:four-way junction DNA binding"/>
    <property type="evidence" value="ECO:0007669"/>
    <property type="project" value="UniProtKB-UniRule"/>
</dbReference>
<dbReference type="GO" id="GO:0009378">
    <property type="term" value="F:four-way junction helicase activity"/>
    <property type="evidence" value="ECO:0007669"/>
    <property type="project" value="InterPro"/>
</dbReference>
<dbReference type="GO" id="GO:0006310">
    <property type="term" value="P:DNA recombination"/>
    <property type="evidence" value="ECO:0007669"/>
    <property type="project" value="UniProtKB-UniRule"/>
</dbReference>
<dbReference type="GO" id="GO:0006281">
    <property type="term" value="P:DNA repair"/>
    <property type="evidence" value="ECO:0007669"/>
    <property type="project" value="UniProtKB-UniRule"/>
</dbReference>
<dbReference type="CDD" id="cd00009">
    <property type="entry name" value="AAA"/>
    <property type="match status" value="1"/>
</dbReference>
<dbReference type="Gene3D" id="1.10.8.60">
    <property type="match status" value="1"/>
</dbReference>
<dbReference type="Gene3D" id="3.40.50.300">
    <property type="entry name" value="P-loop containing nucleotide triphosphate hydrolases"/>
    <property type="match status" value="1"/>
</dbReference>
<dbReference type="Gene3D" id="1.10.10.10">
    <property type="entry name" value="Winged helix-like DNA-binding domain superfamily/Winged helix DNA-binding domain"/>
    <property type="match status" value="1"/>
</dbReference>
<dbReference type="HAMAP" id="MF_00016">
    <property type="entry name" value="DNA_HJ_migration_RuvB"/>
    <property type="match status" value="1"/>
</dbReference>
<dbReference type="InterPro" id="IPR003593">
    <property type="entry name" value="AAA+_ATPase"/>
</dbReference>
<dbReference type="InterPro" id="IPR041445">
    <property type="entry name" value="AAA_lid_4"/>
</dbReference>
<dbReference type="InterPro" id="IPR004605">
    <property type="entry name" value="DNA_helicase_Holl-junc_RuvB"/>
</dbReference>
<dbReference type="InterPro" id="IPR027417">
    <property type="entry name" value="P-loop_NTPase"/>
</dbReference>
<dbReference type="InterPro" id="IPR008824">
    <property type="entry name" value="RuvB-like_N"/>
</dbReference>
<dbReference type="InterPro" id="IPR008823">
    <property type="entry name" value="RuvB_C"/>
</dbReference>
<dbReference type="InterPro" id="IPR036388">
    <property type="entry name" value="WH-like_DNA-bd_sf"/>
</dbReference>
<dbReference type="InterPro" id="IPR036390">
    <property type="entry name" value="WH_DNA-bd_sf"/>
</dbReference>
<dbReference type="NCBIfam" id="NF000868">
    <property type="entry name" value="PRK00080.1"/>
    <property type="match status" value="1"/>
</dbReference>
<dbReference type="NCBIfam" id="TIGR00635">
    <property type="entry name" value="ruvB"/>
    <property type="match status" value="1"/>
</dbReference>
<dbReference type="PANTHER" id="PTHR42848">
    <property type="match status" value="1"/>
</dbReference>
<dbReference type="PANTHER" id="PTHR42848:SF1">
    <property type="entry name" value="HOLLIDAY JUNCTION BRANCH MIGRATION COMPLEX SUBUNIT RUVB"/>
    <property type="match status" value="1"/>
</dbReference>
<dbReference type="Pfam" id="PF17864">
    <property type="entry name" value="AAA_lid_4"/>
    <property type="match status" value="1"/>
</dbReference>
<dbReference type="Pfam" id="PF05491">
    <property type="entry name" value="RuvB_C"/>
    <property type="match status" value="1"/>
</dbReference>
<dbReference type="Pfam" id="PF05496">
    <property type="entry name" value="RuvB_N"/>
    <property type="match status" value="1"/>
</dbReference>
<dbReference type="SMART" id="SM00382">
    <property type="entry name" value="AAA"/>
    <property type="match status" value="1"/>
</dbReference>
<dbReference type="SUPFAM" id="SSF52540">
    <property type="entry name" value="P-loop containing nucleoside triphosphate hydrolases"/>
    <property type="match status" value="1"/>
</dbReference>
<dbReference type="SUPFAM" id="SSF46785">
    <property type="entry name" value="Winged helix' DNA-binding domain"/>
    <property type="match status" value="1"/>
</dbReference>
<protein>
    <recommendedName>
        <fullName evidence="1">Holliday junction branch migration complex subunit RuvB</fullName>
        <ecNumber evidence="1">3.6.4.-</ecNumber>
    </recommendedName>
</protein>
<gene>
    <name evidence="1" type="primary">ruvB</name>
    <name type="ordered locus">HPSH_02025</name>
</gene>
<evidence type="ECO:0000255" key="1">
    <source>
        <dbReference type="HAMAP-Rule" id="MF_00016"/>
    </source>
</evidence>
<comment type="function">
    <text evidence="1">The RuvA-RuvB-RuvC complex processes Holliday junction (HJ) DNA during genetic recombination and DNA repair, while the RuvA-RuvB complex plays an important role in the rescue of blocked DNA replication forks via replication fork reversal (RFR). RuvA specifically binds to HJ cruciform DNA, conferring on it an open structure. The RuvB hexamer acts as an ATP-dependent pump, pulling dsDNA into and through the RuvAB complex. RuvB forms 2 homohexamers on either side of HJ DNA bound by 1 or 2 RuvA tetramers; 4 subunits per hexamer contact DNA at a time. Coordinated motions by a converter formed by DNA-disengaged RuvB subunits stimulates ATP hydrolysis and nucleotide exchange. Immobilization of the converter enables RuvB to convert the ATP-contained energy into a lever motion, pulling 2 nucleotides of DNA out of the RuvA tetramer per ATP hydrolyzed, thus driving DNA branch migration. The RuvB motors rotate together with the DNA substrate, which together with the progressing nucleotide cycle form the mechanistic basis for DNA recombination by continuous HJ branch migration. Branch migration allows RuvC to scan DNA until it finds its consensus sequence, where it cleaves and resolves cruciform DNA.</text>
</comment>
<comment type="catalytic activity">
    <reaction evidence="1">
        <text>ATP + H2O = ADP + phosphate + H(+)</text>
        <dbReference type="Rhea" id="RHEA:13065"/>
        <dbReference type="ChEBI" id="CHEBI:15377"/>
        <dbReference type="ChEBI" id="CHEBI:15378"/>
        <dbReference type="ChEBI" id="CHEBI:30616"/>
        <dbReference type="ChEBI" id="CHEBI:43474"/>
        <dbReference type="ChEBI" id="CHEBI:456216"/>
    </reaction>
</comment>
<comment type="subunit">
    <text evidence="1">Homohexamer. Forms an RuvA(8)-RuvB(12)-Holliday junction (HJ) complex. HJ DNA is sandwiched between 2 RuvA tetramers; dsDNA enters through RuvA and exits via RuvB. An RuvB hexamer assembles on each DNA strand where it exits the tetramer. Each RuvB hexamer is contacted by two RuvA subunits (via domain III) on 2 adjacent RuvB subunits; this complex drives branch migration. In the full resolvosome a probable DNA-RuvA(4)-RuvB(12)-RuvC(2) complex forms which resolves the HJ.</text>
</comment>
<comment type="subcellular location">
    <subcellularLocation>
        <location evidence="1">Cytoplasm</location>
    </subcellularLocation>
</comment>
<comment type="domain">
    <text evidence="1">Has 3 domains, the large (RuvB-L) and small ATPase (RuvB-S) domains and the C-terminal head (RuvB-H) domain. The head domain binds DNA, while the ATPase domains jointly bind ATP, ADP or are empty depending on the state of the subunit in the translocation cycle. During a single DNA translocation step the structure of each domain remains the same, but their relative positions change.</text>
</comment>
<comment type="similarity">
    <text evidence="1">Belongs to the RuvB family.</text>
</comment>
<organism>
    <name type="scientific">Helicobacter pylori (strain Shi470)</name>
    <dbReference type="NCBI Taxonomy" id="512562"/>
    <lineage>
        <taxon>Bacteria</taxon>
        <taxon>Pseudomonadati</taxon>
        <taxon>Campylobacterota</taxon>
        <taxon>Epsilonproteobacteria</taxon>
        <taxon>Campylobacterales</taxon>
        <taxon>Helicobacteraceae</taxon>
        <taxon>Helicobacter</taxon>
    </lineage>
</organism>
<feature type="chain" id="PRO_1000089652" description="Holliday junction branch migration complex subunit RuvB">
    <location>
        <begin position="1"/>
        <end position="336"/>
    </location>
</feature>
<feature type="region of interest" description="Large ATPase domain (RuvB-L)" evidence="1">
    <location>
        <begin position="1"/>
        <end position="182"/>
    </location>
</feature>
<feature type="region of interest" description="Small ATPAse domain (RuvB-S)" evidence="1">
    <location>
        <begin position="183"/>
        <end position="253"/>
    </location>
</feature>
<feature type="region of interest" description="Head domain (RuvB-H)" evidence="1">
    <location>
        <begin position="256"/>
        <end position="336"/>
    </location>
</feature>
<feature type="binding site" evidence="1">
    <location>
        <position position="21"/>
    </location>
    <ligand>
        <name>ATP</name>
        <dbReference type="ChEBI" id="CHEBI:30616"/>
    </ligand>
</feature>
<feature type="binding site" evidence="1">
    <location>
        <position position="22"/>
    </location>
    <ligand>
        <name>ATP</name>
        <dbReference type="ChEBI" id="CHEBI:30616"/>
    </ligand>
</feature>
<feature type="binding site" evidence="1">
    <location>
        <position position="63"/>
    </location>
    <ligand>
        <name>ATP</name>
        <dbReference type="ChEBI" id="CHEBI:30616"/>
    </ligand>
</feature>
<feature type="binding site" evidence="1">
    <location>
        <position position="66"/>
    </location>
    <ligand>
        <name>ATP</name>
        <dbReference type="ChEBI" id="CHEBI:30616"/>
    </ligand>
</feature>
<feature type="binding site" evidence="1">
    <location>
        <position position="67"/>
    </location>
    <ligand>
        <name>ATP</name>
        <dbReference type="ChEBI" id="CHEBI:30616"/>
    </ligand>
</feature>
<feature type="binding site" evidence="1">
    <location>
        <position position="67"/>
    </location>
    <ligand>
        <name>Mg(2+)</name>
        <dbReference type="ChEBI" id="CHEBI:18420"/>
    </ligand>
</feature>
<feature type="binding site" evidence="1">
    <location>
        <position position="68"/>
    </location>
    <ligand>
        <name>ATP</name>
        <dbReference type="ChEBI" id="CHEBI:30616"/>
    </ligand>
</feature>
<feature type="binding site" evidence="1">
    <location>
        <begin position="129"/>
        <end position="131"/>
    </location>
    <ligand>
        <name>ATP</name>
        <dbReference type="ChEBI" id="CHEBI:30616"/>
    </ligand>
</feature>
<feature type="binding site" evidence="1">
    <location>
        <position position="172"/>
    </location>
    <ligand>
        <name>ATP</name>
        <dbReference type="ChEBI" id="CHEBI:30616"/>
    </ligand>
</feature>
<feature type="binding site" evidence="1">
    <location>
        <position position="182"/>
    </location>
    <ligand>
        <name>ATP</name>
        <dbReference type="ChEBI" id="CHEBI:30616"/>
    </ligand>
</feature>
<feature type="binding site" evidence="1">
    <location>
        <position position="219"/>
    </location>
    <ligand>
        <name>ATP</name>
        <dbReference type="ChEBI" id="CHEBI:30616"/>
    </ligand>
</feature>
<feature type="binding site" evidence="1">
    <location>
        <position position="310"/>
    </location>
    <ligand>
        <name>DNA</name>
        <dbReference type="ChEBI" id="CHEBI:16991"/>
    </ligand>
</feature>
<feature type="binding site" evidence="1">
    <location>
        <position position="315"/>
    </location>
    <ligand>
        <name>DNA</name>
        <dbReference type="ChEBI" id="CHEBI:16991"/>
    </ligand>
</feature>
<sequence>MKERIVNLETLDFETSQEASLRPNLWEDYIGQEKIKSNLQVSICAAKKRQESLDHMLFFGPPGLGKTSISHIIAKEMETNLKITAAPMIEKSGDLAAILTNLQAKDILFIDEIHRLSPAIEEVLYPAMEDFRLDIIIGSGPAAQTIKIDLPPFTLIGATTRAGMLSNPLRDRFGMSFRMQFYSPSELALIIKKAAAKLNQDIKEESADEIAKRSRGTPRIALRLLKRVRDFALVKNSSLMDLNITLHALNELGVNELGFDEADLAYLSLLANAQGRPVGLNTIAASMREDEGTIEDVIEPFLLANGYLERTAKGRIATPKTHALLKIPTLNPQTLF</sequence>
<keyword id="KW-0067">ATP-binding</keyword>
<keyword id="KW-0963">Cytoplasm</keyword>
<keyword id="KW-0227">DNA damage</keyword>
<keyword id="KW-0233">DNA recombination</keyword>
<keyword id="KW-0234">DNA repair</keyword>
<keyword id="KW-0238">DNA-binding</keyword>
<keyword id="KW-0378">Hydrolase</keyword>
<keyword id="KW-0547">Nucleotide-binding</keyword>
<accession>B2USM3</accession>